<gene>
    <name type="primary">MUC1</name>
</gene>
<feature type="signal peptide" evidence="3">
    <location>
        <begin position="1"/>
        <end position="23"/>
    </location>
</feature>
<feature type="chain" id="PRO_0000019278" description="Mucin-1">
    <location>
        <begin position="24"/>
        <end position="475"/>
    </location>
</feature>
<feature type="chain" id="PRO_0000317448" description="Mucin-1 subunit alpha" evidence="1">
    <location>
        <begin position="24"/>
        <end position="317"/>
    </location>
</feature>
<feature type="chain" id="PRO_0000317449" description="Mucin-1 subunit beta" evidence="1">
    <location>
        <begin position="318"/>
        <end position="475"/>
    </location>
</feature>
<feature type="topological domain" description="Extracellular" evidence="3">
    <location>
        <begin position="24"/>
        <end position="380"/>
    </location>
</feature>
<feature type="transmembrane region" description="Helical" evidence="3">
    <location>
        <begin position="381"/>
        <end position="401"/>
    </location>
</feature>
<feature type="topological domain" description="Cytoplasmic" evidence="3">
    <location>
        <begin position="402"/>
        <end position="475"/>
    </location>
</feature>
<feature type="repeat" description="1">
    <location>
        <begin position="86"/>
        <end position="105"/>
    </location>
</feature>
<feature type="repeat" description="2">
    <location>
        <begin position="106"/>
        <end position="125"/>
    </location>
</feature>
<feature type="repeat" description="3">
    <location>
        <begin position="126"/>
        <end position="145"/>
    </location>
</feature>
<feature type="repeat" description="4">
    <location>
        <begin position="146"/>
        <end position="165"/>
    </location>
</feature>
<feature type="repeat" description="5">
    <location>
        <begin position="166"/>
        <end position="185"/>
    </location>
</feature>
<feature type="domain" description="SEA" evidence="4">
    <location>
        <begin position="259"/>
        <end position="368"/>
    </location>
</feature>
<feature type="region of interest" description="Disordered" evidence="5">
    <location>
        <begin position="23"/>
        <end position="252"/>
    </location>
</feature>
<feature type="region of interest" description="5 X 20 AA approximate tandem repeats">
    <location>
        <begin position="86"/>
        <end position="185"/>
    </location>
</feature>
<feature type="region of interest" description="Interaction with P53" evidence="1">
    <location>
        <begin position="412"/>
        <end position="448"/>
    </location>
</feature>
<feature type="region of interest" description="Disordered" evidence="5">
    <location>
        <begin position="435"/>
        <end position="460"/>
    </location>
</feature>
<feature type="region of interest" description="Required for interaction with GSK3B" evidence="1">
    <location>
        <begin position="443"/>
        <end position="450"/>
    </location>
</feature>
<feature type="region of interest" description="Required for interaction with beta- and gamma-catenins" evidence="1">
    <location>
        <begin position="453"/>
        <end position="461"/>
    </location>
</feature>
<feature type="short sequence motif" description="Interaction with GRB2" evidence="1">
    <location>
        <begin position="423"/>
        <end position="426"/>
    </location>
</feature>
<feature type="short sequence motif" description="Interaction with SRC and ESR1" evidence="1">
    <location>
        <begin position="449"/>
        <end position="452"/>
    </location>
</feature>
<feature type="short sequence motif" description="Required for interaction with AP1S2" evidence="1">
    <location>
        <begin position="463"/>
        <end position="466"/>
    </location>
</feature>
<feature type="compositionally biased region" description="Polar residues" evidence="5">
    <location>
        <begin position="38"/>
        <end position="48"/>
    </location>
</feature>
<feature type="compositionally biased region" description="Low complexity" evidence="5">
    <location>
        <begin position="54"/>
        <end position="75"/>
    </location>
</feature>
<feature type="compositionally biased region" description="Polar residues" evidence="5">
    <location>
        <begin position="90"/>
        <end position="102"/>
    </location>
</feature>
<feature type="compositionally biased region" description="Polar residues" evidence="5">
    <location>
        <begin position="109"/>
        <end position="122"/>
    </location>
</feature>
<feature type="compositionally biased region" description="Low complexity" evidence="5">
    <location>
        <begin position="180"/>
        <end position="190"/>
    </location>
</feature>
<feature type="compositionally biased region" description="Polar residues" evidence="5">
    <location>
        <begin position="191"/>
        <end position="213"/>
    </location>
</feature>
<feature type="compositionally biased region" description="Polar residues" evidence="5">
    <location>
        <begin position="233"/>
        <end position="252"/>
    </location>
</feature>
<feature type="site" description="Cleavage; by autolysis" evidence="1">
    <location>
        <begin position="317"/>
        <end position="318"/>
    </location>
</feature>
<feature type="modified residue" description="Phosphotyrosine; by PDGFR" evidence="2">
    <location>
        <position position="423"/>
    </location>
</feature>
<feature type="modified residue" description="Phosphotyrosine" evidence="2">
    <location>
        <position position="432"/>
    </location>
</feature>
<feature type="modified residue" description="Phosphotyrosine; by PDGFR" evidence="2">
    <location>
        <position position="438"/>
    </location>
</feature>
<feature type="modified residue" description="Phosphothreonine; by PKC/PRKCD" evidence="2">
    <location>
        <position position="444"/>
    </location>
</feature>
<feature type="modified residue" description="Phosphoserine; by GSK3-beta" evidence="2">
    <location>
        <position position="447"/>
    </location>
</feature>
<feature type="modified residue" description="Phosphotyrosine; by CSK, EGFR and SRC" evidence="2">
    <location>
        <position position="449"/>
    </location>
</feature>
<feature type="modified residue" description="Phosphotyrosine" evidence="2">
    <location>
        <position position="463"/>
    </location>
</feature>
<feature type="lipid moiety-binding region" description="S-palmitoyl cysteine" evidence="1">
    <location>
        <position position="404"/>
    </location>
</feature>
<feature type="lipid moiety-binding region" description="S-palmitoyl cysteine" evidence="1">
    <location>
        <position position="406"/>
    </location>
</feature>
<feature type="glycosylation site" description="O-linked (GalNAc...) threonine" evidence="3">
    <location>
        <position position="93"/>
    </location>
</feature>
<feature type="glycosylation site" description="O-linked (GalNAc...) threonine" evidence="3">
    <location>
        <position position="99"/>
    </location>
</feature>
<feature type="glycosylation site" description="O-linked (GalNAc...) serine" evidence="3">
    <location>
        <position position="100"/>
    </location>
</feature>
<feature type="glycosylation site" description="O-linked (GalNAc...) threonine" evidence="3">
    <location>
        <position position="104"/>
    </location>
</feature>
<feature type="glycosylation site" description="N-linked (GlcNAc...) asparagine" evidence="3">
    <location>
        <position position="177"/>
    </location>
</feature>
<feature type="glycosylation site" description="N-linked (GlcNAc...) asparagine" evidence="3">
    <location>
        <position position="195"/>
    </location>
</feature>
<feature type="glycosylation site" description="N-linked (GlcNAc...) asparagine" evidence="3">
    <location>
        <position position="249"/>
    </location>
</feature>
<feature type="glycosylation site" description="N-linked (GlcNAc...) asparagine" evidence="3">
    <location>
        <position position="275"/>
    </location>
</feature>
<feature type="glycosylation site" description="N-linked (GlcNAc...) asparagine" evidence="3">
    <location>
        <position position="353"/>
    </location>
</feature>
<comment type="function">
    <text evidence="1">The alpha subunit has cell adhesive properties. Can act both as an adhesion and an anti-adhesion protein. May provide a protective layer on epithelial cells against bacterial and enzyme attack (By similarity).</text>
</comment>
<comment type="function">
    <text evidence="1">The beta subunit contains a C-terminal domain which is involved in cell signaling, through phosphorylations and protein-protein interactions. Modulates signaling in ERK, Src and NF-kappaB pathways. In activated T-cells, influences directly or indirectly the Ras/MAPK pathway. Promotes tumor progression. Regulates P53-mediated transcription and determines cell fate in the genotoxic stress response. Binds, together with KLF4, the PE21 promoter element of P53 and represses P53 activity (By similarity).</text>
</comment>
<comment type="subunit">
    <text evidence="1">The alpha subunit forms a tight, non-covalent heterodimeric complex with the proteolytically-released beta-subunit. Binds directly the SH2 domain of GRB2, and forms a MUC1/GRB2/SOS1 complex involved in RAS signaling. The cytoplasmic tail (MUC1CT) interacts with several proteins such as SRC, CTNNB1 and ERBs. Interaction with the SH2 domain of CSK decreases interaction with GSK3B. Interacts with CTNNB1/beta-catenin and JUP/gamma-catenin and promotes cell adhesion. Interaction with JUP/gamma-catenin is induced by heregulin. Binds PRKCD, ERBB2, ERBB3 and ERBB4. Heregulin (HRG) stimulates the interaction with ERBB2 and, to a much lesser extent, the interaction with ERBB3 and ERBB4. Interacts with P53 in response to DNA damage. Interacts with KLF4. Interacts with estrogen receptor alpha/ESR1, through its DNA-binding domain, and stimulates its transcription activity. Binds ADAM17 (By similarity).</text>
</comment>
<comment type="subcellular location">
    <subcellularLocation>
        <location>Apical cell membrane</location>
        <topology>Single-pass type I membrane protein</topology>
    </subcellularLocation>
    <text evidence="1">Exclusively located in the apical domain of the plasma membrane of highly polarized epithelial cells. After endocytosis, internalized and recycled to the cell membrane. Located to microvilli and to the tips of long filopodial protusions (By similarity).</text>
</comment>
<comment type="subcellular location">
    <molecule>Mucin-1 subunit beta</molecule>
    <subcellularLocation>
        <location>Cell membrane</location>
    </subcellularLocation>
    <subcellularLocation>
        <location>Cytoplasm</location>
    </subcellularLocation>
    <subcellularLocation>
        <location>Nucleus</location>
    </subcellularLocation>
    <text evidence="1">On EGF and PDGFRB stimulation, transported to the nucleus through interaction with CTNNB1, a process which is stimulated by phosphorylation. On HRG stimulation, colocalizes with JUP/gamma-catenin at the nucleus (By similarity).</text>
</comment>
<comment type="PTM">
    <text>Probably both N- and O-glycosylated (in repeat region).</text>
</comment>
<comment type="PTM">
    <text evidence="1">Proteolytic cleavage in the SEA domain occurs in the endoplasmic reticulum by an autoproteolytic mechanism and requires the full-length SEA domain as well as requiring a Ser, Thr or Cys residue at the P + 1 site. Ectodomain shedding is mediated by ADAM17 in uterine epithelial cells (By similarity).</text>
</comment>
<comment type="PTM">
    <text evidence="1">Dual palmitoylation on cysteine residues in the CQC motif is required for recycling from endosomes back to the plasma membrane.</text>
</comment>
<comment type="PTM">
    <text evidence="1">Phosphorylated on tyrosines and serine residues in the C-terminal. Phosphorylation on tyrosines in the C-terminal increases the nuclear location of MUC1 and beta-catenin. Phosphorylation by PKC delta induces binding of MUC1 to beta-catenin/CTNNB1 and thus decreases the formation of the beta-catenin/E-cadherin complex. Src-mediated phosphorylation inhibits interaction with GSK3B. Csk- or Src- or EGFR-mediated phosphorylation on Tyr-449 increases binding to beta-catenin/CTNNB1. GSK3B-mediated phosphorylation on Ser-447 decreases this interaction but restores the formation of the beta-cadherin/E-cadherin complex. On T-cell receptor activation, phosphorylated by LCK. PDGFR-mediated phosphorylation increases nuclear colocalization of MUC1CT and CTNNB1 (By similarity).</text>
</comment>
<comment type="caution">
    <text evidence="6">O-glycosylation sites are annotated in first sequence repeat only. Residues at similar position are probably glycosylated in all repeats.</text>
</comment>
<organism>
    <name type="scientific">Hylobates lar</name>
    <name type="common">Lar gibbon</name>
    <name type="synonym">White-handed gibbon</name>
    <dbReference type="NCBI Taxonomy" id="9580"/>
    <lineage>
        <taxon>Eukaryota</taxon>
        <taxon>Metazoa</taxon>
        <taxon>Chordata</taxon>
        <taxon>Craniata</taxon>
        <taxon>Vertebrata</taxon>
        <taxon>Euteleostomi</taxon>
        <taxon>Mammalia</taxon>
        <taxon>Eutheria</taxon>
        <taxon>Euarchontoglires</taxon>
        <taxon>Primates</taxon>
        <taxon>Haplorrhini</taxon>
        <taxon>Catarrhini</taxon>
        <taxon>Hylobatidae</taxon>
        <taxon>Hylobates</taxon>
    </lineage>
</organism>
<name>MUC1_HYLLA</name>
<protein>
    <recommendedName>
        <fullName>Mucin-1</fullName>
        <shortName>MUC-1</shortName>
    </recommendedName>
    <cdAntigenName>CD227</cdAntigenName>
    <component>
        <recommendedName>
            <fullName>Mucin-1 subunit alpha</fullName>
            <shortName>MUC1-NT</shortName>
            <shortName>MUC1-alpha</shortName>
        </recommendedName>
    </component>
    <component>
        <recommendedName>
            <fullName>Mucin-1 subunit beta</fullName>
            <shortName>MUC1-beta</shortName>
        </recommendedName>
        <alternativeName>
            <fullName>MUC1-CT</fullName>
        </alternativeName>
    </component>
</protein>
<dbReference type="EMBL" id="L41589">
    <property type="protein sequence ID" value="AAA69965.1"/>
    <property type="molecule type" value="Genomic_DNA"/>
</dbReference>
<dbReference type="EMBL" id="L41625">
    <property type="protein sequence ID" value="AAA69918.1"/>
    <property type="molecule type" value="Genomic_DNA"/>
</dbReference>
<dbReference type="EMBL" id="L41624">
    <property type="protein sequence ID" value="AAA69918.1"/>
    <property type="status" value="JOINED"/>
    <property type="molecule type" value="Genomic_DNA"/>
</dbReference>
<dbReference type="SMR" id="Q29435"/>
<dbReference type="GlyCosmos" id="Q29435">
    <property type="glycosylation" value="9 sites, No reported glycans"/>
</dbReference>
<dbReference type="GO" id="GO:0016324">
    <property type="term" value="C:apical plasma membrane"/>
    <property type="evidence" value="ECO:0007669"/>
    <property type="project" value="UniProtKB-SubCell"/>
</dbReference>
<dbReference type="GO" id="GO:0005737">
    <property type="term" value="C:cytoplasm"/>
    <property type="evidence" value="ECO:0007669"/>
    <property type="project" value="UniProtKB-SubCell"/>
</dbReference>
<dbReference type="GO" id="GO:0005634">
    <property type="term" value="C:nucleus"/>
    <property type="evidence" value="ECO:0007669"/>
    <property type="project" value="UniProtKB-SubCell"/>
</dbReference>
<dbReference type="Gene3D" id="6.10.140.600">
    <property type="match status" value="1"/>
</dbReference>
<dbReference type="InterPro" id="IPR000082">
    <property type="entry name" value="SEA_dom"/>
</dbReference>
<dbReference type="InterPro" id="IPR036364">
    <property type="entry name" value="SEA_dom_sf"/>
</dbReference>
<dbReference type="PANTHER" id="PTHR10006:SF19">
    <property type="entry name" value="MUCIN-1"/>
    <property type="match status" value="1"/>
</dbReference>
<dbReference type="PANTHER" id="PTHR10006">
    <property type="entry name" value="MUCIN-1-RELATED"/>
    <property type="match status" value="1"/>
</dbReference>
<dbReference type="Pfam" id="PF01390">
    <property type="entry name" value="SEA"/>
    <property type="match status" value="1"/>
</dbReference>
<dbReference type="SMART" id="SM00200">
    <property type="entry name" value="SEA"/>
    <property type="match status" value="1"/>
</dbReference>
<dbReference type="SUPFAM" id="SSF82671">
    <property type="entry name" value="SEA domain"/>
    <property type="match status" value="1"/>
</dbReference>
<dbReference type="PROSITE" id="PS50024">
    <property type="entry name" value="SEA"/>
    <property type="match status" value="1"/>
</dbReference>
<sequence length="475" mass="49372">MTPGTQSLFFLLLLLTVLTVVTGSGHASSTPGGEKETSATQRSSMPSSTEKKVVSMTSSVLSSHSPGSGSSTTQGQDVSLAPATEPASGSAATWGQDVTSVPVTRPAPGSTTSPAQDVTSAPDTRPALGSTAPPVHGVTSAPDTRPTLGSTAPPVHGVTSAPDTRPTLGSTAPPVHNVTSASGSASGSASTLVHNGTSARATTTPASKSTPFSIPSHHSDTPTTLTSHSTKTDASSTHHSTVSPLTSSNHSTSPQLSIGVSFFFLSFHISNLQFNSSLEDPSTNYYQELQRDISELILQIYKQGDFLGVSNIKFRPGSVVVQSTLAFREGTTNVHDVEAQFNQHKTEAASRYNLTISDVSVSDVPFPFSAQSGAGVPGWGIALLVLVCVLVALAIVYLIALAVCQCRRKNYGQLDIFPARDAYHPMSEYPTYHTHGRYVPPSSTNRSPYEKVSEGNGGSSLSYTNPAVAATSANL</sequence>
<accession>Q29435</accession>
<proteinExistence type="inferred from homology"/>
<evidence type="ECO:0000250" key="1"/>
<evidence type="ECO:0000250" key="2">
    <source>
        <dbReference type="UniProtKB" id="P15941"/>
    </source>
</evidence>
<evidence type="ECO:0000255" key="3"/>
<evidence type="ECO:0000255" key="4">
    <source>
        <dbReference type="PROSITE-ProRule" id="PRU00188"/>
    </source>
</evidence>
<evidence type="ECO:0000256" key="5">
    <source>
        <dbReference type="SAM" id="MobiDB-lite"/>
    </source>
</evidence>
<evidence type="ECO:0000305" key="6"/>
<keyword id="KW-0068">Autocatalytic cleavage</keyword>
<keyword id="KW-1003">Cell membrane</keyword>
<keyword id="KW-0963">Cytoplasm</keyword>
<keyword id="KW-0325">Glycoprotein</keyword>
<keyword id="KW-0449">Lipoprotein</keyword>
<keyword id="KW-0472">Membrane</keyword>
<keyword id="KW-0539">Nucleus</keyword>
<keyword id="KW-0564">Palmitate</keyword>
<keyword id="KW-0597">Phosphoprotein</keyword>
<keyword id="KW-0677">Repeat</keyword>
<keyword id="KW-0732">Signal</keyword>
<keyword id="KW-0812">Transmembrane</keyword>
<keyword id="KW-1133">Transmembrane helix</keyword>
<reference key="1">
    <citation type="journal article" date="1995" name="Mamm. Genome">
        <title>Analysis of mammalian MUC1 genes reveals potential functionally important domains.</title>
        <authorList>
            <person name="Spicer A.P."/>
            <person name="Duhig T."/>
            <person name="Chilton B.S."/>
            <person name="Gendler S.J."/>
        </authorList>
    </citation>
    <scope>NUCLEOTIDE SEQUENCE [GENOMIC DNA]</scope>
</reference>